<name>HEM3_BURVG</name>
<keyword id="KW-0627">Porphyrin biosynthesis</keyword>
<keyword id="KW-0808">Transferase</keyword>
<accession>A4JGV4</accession>
<feature type="chain" id="PRO_1000047741" description="Porphobilinogen deaminase">
    <location>
        <begin position="1"/>
        <end position="333"/>
    </location>
</feature>
<feature type="modified residue" description="S-(dipyrrolylmethanemethyl)cysteine" evidence="1">
    <location>
        <position position="255"/>
    </location>
</feature>
<comment type="function">
    <text evidence="1">Tetrapolymerization of the monopyrrole PBG into the hydroxymethylbilane pre-uroporphyrinogen in several discrete steps.</text>
</comment>
<comment type="catalytic activity">
    <reaction evidence="1">
        <text>4 porphobilinogen + H2O = hydroxymethylbilane + 4 NH4(+)</text>
        <dbReference type="Rhea" id="RHEA:13185"/>
        <dbReference type="ChEBI" id="CHEBI:15377"/>
        <dbReference type="ChEBI" id="CHEBI:28938"/>
        <dbReference type="ChEBI" id="CHEBI:57845"/>
        <dbReference type="ChEBI" id="CHEBI:58126"/>
        <dbReference type="EC" id="2.5.1.61"/>
    </reaction>
</comment>
<comment type="cofactor">
    <cofactor evidence="1">
        <name>dipyrromethane</name>
        <dbReference type="ChEBI" id="CHEBI:60342"/>
    </cofactor>
    <text evidence="1">Binds 1 dipyrromethane group covalently.</text>
</comment>
<comment type="pathway">
    <text evidence="1">Porphyrin-containing compound metabolism; protoporphyrin-IX biosynthesis; coproporphyrinogen-III from 5-aminolevulinate: step 2/4.</text>
</comment>
<comment type="subunit">
    <text evidence="1">Monomer.</text>
</comment>
<comment type="miscellaneous">
    <text evidence="1">The porphobilinogen subunits are added to the dipyrromethane group.</text>
</comment>
<comment type="similarity">
    <text evidence="1">Belongs to the HMBS family.</text>
</comment>
<proteinExistence type="inferred from homology"/>
<organism>
    <name type="scientific">Burkholderia vietnamiensis (strain G4 / LMG 22486)</name>
    <name type="common">Burkholderia cepacia (strain R1808)</name>
    <dbReference type="NCBI Taxonomy" id="269482"/>
    <lineage>
        <taxon>Bacteria</taxon>
        <taxon>Pseudomonadati</taxon>
        <taxon>Pseudomonadota</taxon>
        <taxon>Betaproteobacteria</taxon>
        <taxon>Burkholderiales</taxon>
        <taxon>Burkholderiaceae</taxon>
        <taxon>Burkholderia</taxon>
        <taxon>Burkholderia cepacia complex</taxon>
    </lineage>
</organism>
<gene>
    <name evidence="1" type="primary">hemC</name>
    <name type="ordered locus">Bcep1808_2509</name>
</gene>
<sequence>MNSETFSAGPKSAPAPATLTIASRESRLAMWQAEHVRDALRKLYPACDVKILGMTTRGDQILDRTLSKVGGKGLFVKELENALADGRADLAVHSLKDVPMALPDGFALAAIMAREDARDAFVSNDYASLDALPAGAVVGTSSLRREAMLRARYPHLNVLPLRGNLDTRLAKLDRGDYAAIILAAAGLKRLGLEARIRALIDVEDSLPAAGQGALGIEIAAHRSDVAQWLAPLHDPHTALAVEAERMVSRALGGSCEVPLAAHAVWRAGELYLTGRVSTTDGRRVLSAQACGAVMTAADALALGRAVSDELDAQGARDIVNALLAGSQVGKGDA</sequence>
<reference key="1">
    <citation type="submission" date="2007-03" db="EMBL/GenBank/DDBJ databases">
        <title>Complete sequence of chromosome 1 of Burkholderia vietnamiensis G4.</title>
        <authorList>
            <consortium name="US DOE Joint Genome Institute"/>
            <person name="Copeland A."/>
            <person name="Lucas S."/>
            <person name="Lapidus A."/>
            <person name="Barry K."/>
            <person name="Detter J.C."/>
            <person name="Glavina del Rio T."/>
            <person name="Hammon N."/>
            <person name="Israni S."/>
            <person name="Dalin E."/>
            <person name="Tice H."/>
            <person name="Pitluck S."/>
            <person name="Chain P."/>
            <person name="Malfatti S."/>
            <person name="Shin M."/>
            <person name="Vergez L."/>
            <person name="Schmutz J."/>
            <person name="Larimer F."/>
            <person name="Land M."/>
            <person name="Hauser L."/>
            <person name="Kyrpides N."/>
            <person name="Tiedje J."/>
            <person name="Richardson P."/>
        </authorList>
    </citation>
    <scope>NUCLEOTIDE SEQUENCE [LARGE SCALE GENOMIC DNA]</scope>
    <source>
        <strain>G4 / LMG 22486</strain>
    </source>
</reference>
<dbReference type="EC" id="2.5.1.61" evidence="1"/>
<dbReference type="EMBL" id="CP000614">
    <property type="protein sequence ID" value="ABO55507.1"/>
    <property type="molecule type" value="Genomic_DNA"/>
</dbReference>
<dbReference type="SMR" id="A4JGV4"/>
<dbReference type="KEGG" id="bvi:Bcep1808_2509"/>
<dbReference type="eggNOG" id="COG0181">
    <property type="taxonomic scope" value="Bacteria"/>
</dbReference>
<dbReference type="HOGENOM" id="CLU_019704_1_0_4"/>
<dbReference type="UniPathway" id="UPA00251">
    <property type="reaction ID" value="UER00319"/>
</dbReference>
<dbReference type="Proteomes" id="UP000002287">
    <property type="component" value="Chromosome 1"/>
</dbReference>
<dbReference type="GO" id="GO:0005737">
    <property type="term" value="C:cytoplasm"/>
    <property type="evidence" value="ECO:0007669"/>
    <property type="project" value="TreeGrafter"/>
</dbReference>
<dbReference type="GO" id="GO:0004418">
    <property type="term" value="F:hydroxymethylbilane synthase activity"/>
    <property type="evidence" value="ECO:0007669"/>
    <property type="project" value="UniProtKB-UniRule"/>
</dbReference>
<dbReference type="GO" id="GO:0006782">
    <property type="term" value="P:protoporphyrinogen IX biosynthetic process"/>
    <property type="evidence" value="ECO:0007669"/>
    <property type="project" value="UniProtKB-UniRule"/>
</dbReference>
<dbReference type="CDD" id="cd13646">
    <property type="entry name" value="PBP2_EcHMBS_like"/>
    <property type="match status" value="1"/>
</dbReference>
<dbReference type="FunFam" id="3.40.190.10:FF:000004">
    <property type="entry name" value="Porphobilinogen deaminase"/>
    <property type="match status" value="1"/>
</dbReference>
<dbReference type="FunFam" id="3.40.190.10:FF:000005">
    <property type="entry name" value="Porphobilinogen deaminase"/>
    <property type="match status" value="1"/>
</dbReference>
<dbReference type="Gene3D" id="3.40.190.10">
    <property type="entry name" value="Periplasmic binding protein-like II"/>
    <property type="match status" value="2"/>
</dbReference>
<dbReference type="Gene3D" id="3.30.160.40">
    <property type="entry name" value="Porphobilinogen deaminase, C-terminal domain"/>
    <property type="match status" value="1"/>
</dbReference>
<dbReference type="HAMAP" id="MF_00260">
    <property type="entry name" value="Porphobil_deam"/>
    <property type="match status" value="1"/>
</dbReference>
<dbReference type="InterPro" id="IPR000860">
    <property type="entry name" value="HemC"/>
</dbReference>
<dbReference type="InterPro" id="IPR022419">
    <property type="entry name" value="Porphobilin_deaminase_cofac_BS"/>
</dbReference>
<dbReference type="InterPro" id="IPR022417">
    <property type="entry name" value="Porphobilin_deaminase_N"/>
</dbReference>
<dbReference type="InterPro" id="IPR022418">
    <property type="entry name" value="Porphobilinogen_deaminase_C"/>
</dbReference>
<dbReference type="InterPro" id="IPR036803">
    <property type="entry name" value="Porphobilinogen_deaminase_C_sf"/>
</dbReference>
<dbReference type="NCBIfam" id="TIGR00212">
    <property type="entry name" value="hemC"/>
    <property type="match status" value="1"/>
</dbReference>
<dbReference type="PANTHER" id="PTHR11557">
    <property type="entry name" value="PORPHOBILINOGEN DEAMINASE"/>
    <property type="match status" value="1"/>
</dbReference>
<dbReference type="PANTHER" id="PTHR11557:SF0">
    <property type="entry name" value="PORPHOBILINOGEN DEAMINASE"/>
    <property type="match status" value="1"/>
</dbReference>
<dbReference type="Pfam" id="PF01379">
    <property type="entry name" value="Porphobil_deam"/>
    <property type="match status" value="1"/>
</dbReference>
<dbReference type="Pfam" id="PF03900">
    <property type="entry name" value="Porphobil_deamC"/>
    <property type="match status" value="1"/>
</dbReference>
<dbReference type="PIRSF" id="PIRSF001438">
    <property type="entry name" value="4pyrrol_synth_OHMeBilane_synth"/>
    <property type="match status" value="1"/>
</dbReference>
<dbReference type="PRINTS" id="PR00151">
    <property type="entry name" value="PORPHBDMNASE"/>
</dbReference>
<dbReference type="SUPFAM" id="SSF53850">
    <property type="entry name" value="Periplasmic binding protein-like II"/>
    <property type="match status" value="1"/>
</dbReference>
<dbReference type="SUPFAM" id="SSF54782">
    <property type="entry name" value="Porphobilinogen deaminase (hydroxymethylbilane synthase), C-terminal domain"/>
    <property type="match status" value="1"/>
</dbReference>
<dbReference type="PROSITE" id="PS00533">
    <property type="entry name" value="PORPHOBILINOGEN_DEAM"/>
    <property type="match status" value="1"/>
</dbReference>
<protein>
    <recommendedName>
        <fullName evidence="1">Porphobilinogen deaminase</fullName>
        <shortName evidence="1">PBG</shortName>
        <ecNumber evidence="1">2.5.1.61</ecNumber>
    </recommendedName>
    <alternativeName>
        <fullName evidence="1">Hydroxymethylbilane synthase</fullName>
        <shortName evidence="1">HMBS</shortName>
    </alternativeName>
    <alternativeName>
        <fullName evidence="1">Pre-uroporphyrinogen synthase</fullName>
    </alternativeName>
</protein>
<evidence type="ECO:0000255" key="1">
    <source>
        <dbReference type="HAMAP-Rule" id="MF_00260"/>
    </source>
</evidence>